<organism>
    <name type="scientific">Thermotoga maritima (strain ATCC 43589 / DSM 3109 / JCM 10099 / NBRC 100826 / MSB8)</name>
    <dbReference type="NCBI Taxonomy" id="243274"/>
    <lineage>
        <taxon>Bacteria</taxon>
        <taxon>Thermotogati</taxon>
        <taxon>Thermotogota</taxon>
        <taxon>Thermotogae</taxon>
        <taxon>Thermotogales</taxon>
        <taxon>Thermotogaceae</taxon>
        <taxon>Thermotoga</taxon>
    </lineage>
</organism>
<protein>
    <recommendedName>
        <fullName evidence="1">Methylglyoxal synthase</fullName>
        <shortName evidence="1">MGS</shortName>
        <ecNumber evidence="1">4.2.3.3</ecNumber>
    </recommendedName>
</protein>
<keyword id="KW-0002">3D-structure</keyword>
<keyword id="KW-0456">Lyase</keyword>
<keyword id="KW-1185">Reference proteome</keyword>
<sequence length="155" mass="17641">MDKKKRIALIAHDRRKRDLLEWVSFNLGTLSKHELYATGTTGALLQEKLGLKVHRLKSGPLGGDQQIGAMIAEGKIDVLIFFWDPLEPQAHDVDVKALIRIATVYNIPVAITRSTADFLISSPLMNDVYEKIQIDYEEELERRIRKVVEGEEEET</sequence>
<comment type="function">
    <text evidence="1">Catalyzes the formation of methylglyoxal from dihydroxyacetone phosphate.</text>
</comment>
<comment type="catalytic activity">
    <reaction evidence="1">
        <text>dihydroxyacetone phosphate = methylglyoxal + phosphate</text>
        <dbReference type="Rhea" id="RHEA:17937"/>
        <dbReference type="ChEBI" id="CHEBI:17158"/>
        <dbReference type="ChEBI" id="CHEBI:43474"/>
        <dbReference type="ChEBI" id="CHEBI:57642"/>
        <dbReference type="EC" id="4.2.3.3"/>
    </reaction>
</comment>
<comment type="similarity">
    <text evidence="1">Belongs to the methylglyoxal synthase family.</text>
</comment>
<comment type="sequence caution" evidence="2">
    <conflict type="erroneous initiation">
        <sequence resource="EMBL-CDS" id="AAD36260"/>
    </conflict>
</comment>
<name>MGSA_THEMA</name>
<evidence type="ECO:0000255" key="1">
    <source>
        <dbReference type="HAMAP-Rule" id="MF_00549"/>
    </source>
</evidence>
<evidence type="ECO:0000305" key="2"/>
<evidence type="ECO:0007829" key="3">
    <source>
        <dbReference type="PDB" id="1VMD"/>
    </source>
</evidence>
<accession>Q9X0R7</accession>
<dbReference type="EC" id="4.2.3.3" evidence="1"/>
<dbReference type="EMBL" id="AE000512">
    <property type="protein sequence ID" value="AAD36260.1"/>
    <property type="status" value="ALT_INIT"/>
    <property type="molecule type" value="Genomic_DNA"/>
</dbReference>
<dbReference type="PIR" id="G72284">
    <property type="entry name" value="G72284"/>
</dbReference>
<dbReference type="RefSeq" id="NP_228990.1">
    <property type="nucleotide sequence ID" value="NC_000853.1"/>
</dbReference>
<dbReference type="PDB" id="1VMD">
    <property type="method" value="X-ray"/>
    <property type="resolution" value="2.06 A"/>
    <property type="chains" value="A/B=1-155"/>
</dbReference>
<dbReference type="PDBsum" id="1VMD"/>
<dbReference type="SMR" id="Q9X0R7"/>
<dbReference type="FunCoup" id="Q9X0R7">
    <property type="interactions" value="35"/>
</dbReference>
<dbReference type="STRING" id="243274.TM_1185"/>
<dbReference type="PaxDb" id="243274-THEMA_08410"/>
<dbReference type="EnsemblBacteria" id="AAD36260">
    <property type="protein sequence ID" value="AAD36260"/>
    <property type="gene ID" value="TM_1185"/>
</dbReference>
<dbReference type="KEGG" id="tma:TM1185"/>
<dbReference type="eggNOG" id="COG1803">
    <property type="taxonomic scope" value="Bacteria"/>
</dbReference>
<dbReference type="InParanoid" id="Q9X0R7"/>
<dbReference type="OrthoDB" id="9787147at2"/>
<dbReference type="EvolutionaryTrace" id="Q9X0R7"/>
<dbReference type="Proteomes" id="UP000008183">
    <property type="component" value="Chromosome"/>
</dbReference>
<dbReference type="GO" id="GO:0005829">
    <property type="term" value="C:cytosol"/>
    <property type="evidence" value="ECO:0000318"/>
    <property type="project" value="GO_Central"/>
</dbReference>
<dbReference type="GO" id="GO:0008929">
    <property type="term" value="F:methylglyoxal synthase activity"/>
    <property type="evidence" value="ECO:0000318"/>
    <property type="project" value="GO_Central"/>
</dbReference>
<dbReference type="GO" id="GO:0019242">
    <property type="term" value="P:methylglyoxal biosynthetic process"/>
    <property type="evidence" value="ECO:0000318"/>
    <property type="project" value="GO_Central"/>
</dbReference>
<dbReference type="CDD" id="cd01422">
    <property type="entry name" value="MGS"/>
    <property type="match status" value="1"/>
</dbReference>
<dbReference type="FunFam" id="3.40.50.1380:FF:000002">
    <property type="entry name" value="Methylglyoxal synthase"/>
    <property type="match status" value="1"/>
</dbReference>
<dbReference type="Gene3D" id="3.40.50.1380">
    <property type="entry name" value="Methylglyoxal synthase-like domain"/>
    <property type="match status" value="1"/>
</dbReference>
<dbReference type="HAMAP" id="MF_00549">
    <property type="entry name" value="Methylglyoxal_synth"/>
    <property type="match status" value="1"/>
</dbReference>
<dbReference type="InterPro" id="IPR004363">
    <property type="entry name" value="Methylgl_synth"/>
</dbReference>
<dbReference type="InterPro" id="IPR018148">
    <property type="entry name" value="Methylglyoxal_synth_AS"/>
</dbReference>
<dbReference type="InterPro" id="IPR011607">
    <property type="entry name" value="MGS-like_dom"/>
</dbReference>
<dbReference type="InterPro" id="IPR036914">
    <property type="entry name" value="MGS-like_dom_sf"/>
</dbReference>
<dbReference type="NCBIfam" id="TIGR00160">
    <property type="entry name" value="MGSA"/>
    <property type="match status" value="1"/>
</dbReference>
<dbReference type="NCBIfam" id="NF003559">
    <property type="entry name" value="PRK05234.1"/>
    <property type="match status" value="1"/>
</dbReference>
<dbReference type="PANTHER" id="PTHR30492">
    <property type="entry name" value="METHYLGLYOXAL SYNTHASE"/>
    <property type="match status" value="1"/>
</dbReference>
<dbReference type="PANTHER" id="PTHR30492:SF0">
    <property type="entry name" value="METHYLGLYOXAL SYNTHASE"/>
    <property type="match status" value="1"/>
</dbReference>
<dbReference type="Pfam" id="PF02142">
    <property type="entry name" value="MGS"/>
    <property type="match status" value="1"/>
</dbReference>
<dbReference type="PIRSF" id="PIRSF006614">
    <property type="entry name" value="Methylglyox_syn"/>
    <property type="match status" value="1"/>
</dbReference>
<dbReference type="SMART" id="SM00851">
    <property type="entry name" value="MGS"/>
    <property type="match status" value="1"/>
</dbReference>
<dbReference type="SUPFAM" id="SSF52335">
    <property type="entry name" value="Methylglyoxal synthase-like"/>
    <property type="match status" value="1"/>
</dbReference>
<dbReference type="PROSITE" id="PS01335">
    <property type="entry name" value="METHYLGLYOXAL_SYNTH"/>
    <property type="match status" value="1"/>
</dbReference>
<dbReference type="PROSITE" id="PS51855">
    <property type="entry name" value="MGS"/>
    <property type="match status" value="1"/>
</dbReference>
<feature type="chain" id="PRO_0000178648" description="Methylglyoxal synthase">
    <location>
        <begin position="1"/>
        <end position="155"/>
    </location>
</feature>
<feature type="domain" description="MGS-like" evidence="1">
    <location>
        <begin position="1"/>
        <end position="155"/>
    </location>
</feature>
<feature type="active site" description="Proton donor/acceptor" evidence="1">
    <location>
        <position position="64"/>
    </location>
</feature>
<feature type="binding site" evidence="1">
    <location>
        <position position="12"/>
    </location>
    <ligand>
        <name>substrate</name>
    </ligand>
</feature>
<feature type="binding site" evidence="1">
    <location>
        <position position="16"/>
    </location>
    <ligand>
        <name>substrate</name>
    </ligand>
</feature>
<feature type="binding site" evidence="1">
    <location>
        <begin position="38"/>
        <end position="41"/>
    </location>
    <ligand>
        <name>substrate</name>
    </ligand>
</feature>
<feature type="binding site" evidence="1">
    <location>
        <begin position="58"/>
        <end position="59"/>
    </location>
    <ligand>
        <name>substrate</name>
    </ligand>
</feature>
<feature type="binding site" evidence="1">
    <location>
        <position position="91"/>
    </location>
    <ligand>
        <name>substrate</name>
    </ligand>
</feature>
<feature type="strand" evidence="3">
    <location>
        <begin position="6"/>
        <end position="11"/>
    </location>
</feature>
<feature type="helix" evidence="3">
    <location>
        <begin position="13"/>
        <end position="15"/>
    </location>
</feature>
<feature type="helix" evidence="3">
    <location>
        <begin position="16"/>
        <end position="25"/>
    </location>
</feature>
<feature type="helix" evidence="3">
    <location>
        <begin position="27"/>
        <end position="30"/>
    </location>
</feature>
<feature type="strand" evidence="3">
    <location>
        <begin position="33"/>
        <end position="37"/>
    </location>
</feature>
<feature type="helix" evidence="3">
    <location>
        <begin position="39"/>
        <end position="49"/>
    </location>
</feature>
<feature type="helix" evidence="3">
    <location>
        <begin position="59"/>
        <end position="61"/>
    </location>
</feature>
<feature type="helix" evidence="3">
    <location>
        <begin position="63"/>
        <end position="72"/>
    </location>
</feature>
<feature type="strand" evidence="3">
    <location>
        <begin position="78"/>
        <end position="82"/>
    </location>
</feature>
<feature type="strand" evidence="3">
    <location>
        <begin position="85"/>
        <end position="87"/>
    </location>
</feature>
<feature type="helix" evidence="3">
    <location>
        <begin position="95"/>
        <end position="104"/>
    </location>
</feature>
<feature type="strand" evidence="3">
    <location>
        <begin position="109"/>
        <end position="112"/>
    </location>
</feature>
<feature type="helix" evidence="3">
    <location>
        <begin position="113"/>
        <end position="121"/>
    </location>
</feature>
<feature type="helix" evidence="3">
    <location>
        <begin position="123"/>
        <end position="126"/>
    </location>
</feature>
<feature type="strand" evidence="3">
    <location>
        <begin position="129"/>
        <end position="134"/>
    </location>
</feature>
<feature type="helix" evidence="3">
    <location>
        <begin position="136"/>
        <end position="148"/>
    </location>
</feature>
<reference key="1">
    <citation type="journal article" date="1999" name="Nature">
        <title>Evidence for lateral gene transfer between Archaea and Bacteria from genome sequence of Thermotoga maritima.</title>
        <authorList>
            <person name="Nelson K.E."/>
            <person name="Clayton R.A."/>
            <person name="Gill S.R."/>
            <person name="Gwinn M.L."/>
            <person name="Dodson R.J."/>
            <person name="Haft D.H."/>
            <person name="Hickey E.K."/>
            <person name="Peterson J.D."/>
            <person name="Nelson W.C."/>
            <person name="Ketchum K.A."/>
            <person name="McDonald L.A."/>
            <person name="Utterback T.R."/>
            <person name="Malek J.A."/>
            <person name="Linher K.D."/>
            <person name="Garrett M.M."/>
            <person name="Stewart A.M."/>
            <person name="Cotton M.D."/>
            <person name="Pratt M.S."/>
            <person name="Phillips C.A."/>
            <person name="Richardson D.L."/>
            <person name="Heidelberg J.F."/>
            <person name="Sutton G.G."/>
            <person name="Fleischmann R.D."/>
            <person name="Eisen J.A."/>
            <person name="White O."/>
            <person name="Salzberg S.L."/>
            <person name="Smith H.O."/>
            <person name="Venter J.C."/>
            <person name="Fraser C.M."/>
        </authorList>
    </citation>
    <scope>NUCLEOTIDE SEQUENCE [LARGE SCALE GENOMIC DNA]</scope>
    <source>
        <strain>ATCC 43589 / DSM 3109 / JCM 10099 / NBRC 100826 / MSB8</strain>
    </source>
</reference>
<proteinExistence type="evidence at protein level"/>
<gene>
    <name evidence="1" type="primary">mgsA</name>
    <name type="ordered locus">TM_1185</name>
</gene>